<reference key="1">
    <citation type="submission" date="1993-07" db="EMBL/GenBank/DDBJ databases">
        <authorList>
            <person name="Richter H.E."/>
            <person name="Sengupta-Gopalan C."/>
        </authorList>
    </citation>
    <scope>NUCLEOTIDE SEQUENCE [GENOMIC DNA]</scope>
    <source>
        <strain>cv. Dare</strain>
        <tissue>Leaf</tissue>
    </source>
</reference>
<evidence type="ECO:0000255" key="1"/>
<evidence type="ECO:0000305" key="2"/>
<accession>Q43460</accession>
<dbReference type="EMBL" id="L20310">
    <property type="protein sequence ID" value="AAA99909.1"/>
    <property type="molecule type" value="Genomic_DNA"/>
</dbReference>
<dbReference type="PIR" id="T07735">
    <property type="entry name" value="T07735"/>
</dbReference>
<dbReference type="STRING" id="3847.Q43460"/>
<dbReference type="PaxDb" id="3847-GLYMA13G40400.2"/>
<dbReference type="InParanoid" id="Q43460"/>
<dbReference type="Proteomes" id="UP000008827">
    <property type="component" value="Unplaced"/>
</dbReference>
<dbReference type="GO" id="GO:0043662">
    <property type="term" value="C:peribacteroid fluid"/>
    <property type="evidence" value="ECO:0007669"/>
    <property type="project" value="UniProtKB-SubCell"/>
</dbReference>
<dbReference type="GO" id="GO:0043661">
    <property type="term" value="C:peribacteroid membrane"/>
    <property type="evidence" value="ECO:0007669"/>
    <property type="project" value="UniProtKB-SubCell"/>
</dbReference>
<dbReference type="GO" id="GO:0009877">
    <property type="term" value="P:nodulation"/>
    <property type="evidence" value="ECO:0007669"/>
    <property type="project" value="UniProtKB-KW"/>
</dbReference>
<dbReference type="InterPro" id="IPR003387">
    <property type="entry name" value="Nodulin"/>
</dbReference>
<dbReference type="Pfam" id="PF02451">
    <property type="entry name" value="Nodulin"/>
    <property type="match status" value="2"/>
</dbReference>
<gene>
    <name type="primary">NOD20A</name>
</gene>
<proteinExistence type="inferred from homology"/>
<organism>
    <name type="scientific">Glycine max</name>
    <name type="common">Soybean</name>
    <name type="synonym">Glycine hispida</name>
    <dbReference type="NCBI Taxonomy" id="3847"/>
    <lineage>
        <taxon>Eukaryota</taxon>
        <taxon>Viridiplantae</taxon>
        <taxon>Streptophyta</taxon>
        <taxon>Embryophyta</taxon>
        <taxon>Tracheophyta</taxon>
        <taxon>Spermatophyta</taxon>
        <taxon>Magnoliopsida</taxon>
        <taxon>eudicotyledons</taxon>
        <taxon>Gunneridae</taxon>
        <taxon>Pentapetalae</taxon>
        <taxon>rosids</taxon>
        <taxon>fabids</taxon>
        <taxon>Fabales</taxon>
        <taxon>Fabaceae</taxon>
        <taxon>Papilionoideae</taxon>
        <taxon>50 kb inversion clade</taxon>
        <taxon>NPAAA clade</taxon>
        <taxon>indigoferoid/millettioid clade</taxon>
        <taxon>Phaseoleae</taxon>
        <taxon>Glycine</taxon>
        <taxon>Glycine subgen. Soja</taxon>
    </lineage>
</organism>
<keyword id="KW-0472">Membrane</keyword>
<keyword id="KW-0536">Nodulation</keyword>
<keyword id="KW-1185">Reference proteome</keyword>
<keyword id="KW-0732">Signal</keyword>
<sequence>MRVVLITLFLFIGAAVAEDAGIDAITPEEGKANNIIEAYESPRFQKFVTHCSSHVTQTCSGNDPLNNQEASRMNSPFGLSFCLFDSMEKCLADHKASLKDPQDNNNLASMSSLPGSIQNQPLLIETVKFRTVLKTCSHVSAQYCFTNPNVATSALADCLMPSLNQCVYPGSILLPWPPPPPPPPPPPPPPPPPLI</sequence>
<protein>
    <recommendedName>
        <fullName>Nodulin-20a</fullName>
        <shortName>N-20A</shortName>
        <shortName>Nod-20A</shortName>
    </recommendedName>
</protein>
<feature type="signal peptide" evidence="1">
    <location>
        <begin position="1"/>
        <end position="17"/>
    </location>
</feature>
<feature type="chain" id="PRO_0000019786" description="Nodulin-20a">
    <location>
        <begin position="18"/>
        <end position="195"/>
    </location>
</feature>
<comment type="subcellular location">
    <subcellularLocation>
        <location evidence="2">Symbiosome</location>
        <location evidence="2">Peribacteroid membrane</location>
    </subcellularLocation>
    <subcellularLocation>
        <location evidence="2">Symbiosome</location>
        <location evidence="2">Peribacteroid space</location>
    </subcellularLocation>
</comment>
<comment type="similarity">
    <text evidence="2">Belongs to the nodulin 20 family.</text>
</comment>
<name>NO20A_SOYBN</name>